<gene>
    <name evidence="6" type="primary">PGAP4</name>
    <name type="synonym">C9orf125</name>
    <name type="synonym">TMEM246</name>
</gene>
<name>PGAP4_HUMAN</name>
<comment type="function">
    <text evidence="2">Golgi-resident glycosylphosphatidylinositol (GPI)-N-acetylgalactosamine transferase that catalyzes the N-acetyl-beta-D-galactosamine transfer from an UDP-N-acetyl-alpha-D-galactosamine to the 4-OH-position of the first mannose of the glycosylphosphatidylinositol (GPI) of a GPI-anchored protein (GPI-AP) (PubMed:29374258). This modification occurs after the fatty acid remodeling step of the GPI-anchor maturation (PubMed:29374258).</text>
</comment>
<comment type="subcellular location">
    <subcellularLocation>
        <location evidence="2">Golgi apparatus membrane</location>
        <topology evidence="1">Multi-pass membrane protein</topology>
    </subcellularLocation>
</comment>
<comment type="domain">
    <text evidence="2">Contains three transmembrane domains, including a tandem transmembrane domain insertion into its glycosyltransferase-A fold (PubMed:29374258). Transmembrane domain 1 functions as a signal for Golgi targeting (PubMed:29374258).</text>
</comment>
<comment type="domain">
    <text evidence="2">The conserved DXD motif is involved in enzyme activity.</text>
</comment>
<comment type="PTM">
    <text evidence="2">Glycosylated.</text>
</comment>
<comment type="similarity">
    <text evidence="4">Belongs to the PGAP4 family.</text>
</comment>
<sequence length="403" mass="46588">MSTSTSPAAMLLRRLRRLSWGSTAVQLFILTVVTFGLLAPLACHRLLHSYFYLRHWHLNQMSQEFLQQSLKEGEAALHYFEELPSANGSVPIVWQATPRPWLVITIITVDRQPGFHYVLQVVSQFHRLLQQCGPQCEGHQLFLCNVERSVSHFDAKLLSKYVPVANRYEGTEDDYGDDPSTNSFEKEKQDYVYCLESSLQTYNPDYVLMVEDDAVPEEQIFPVLEHLLRARFSEPHLRDALYLKLYHPERLQHYINPEPMRILEWVGVGMLLGPLLTWIYMRFASRPGFSWPVMLFFSLYSMGLVELVGRHYFLELRRLSPSLYSVVPASQCCTPAMLFPAPAARRTLTYLSQVYCHKGFGKDMALYSLLRAKGERAYVVEPNLVKHIGLFSSLRYNFHPSLL</sequence>
<proteinExistence type="evidence at protein level"/>
<accession>Q9BRR3</accession>
<accession>Q49AQ4</accession>
<keyword id="KW-1015">Disulfide bond</keyword>
<keyword id="KW-0325">Glycoprotein</keyword>
<keyword id="KW-0333">Golgi apparatus</keyword>
<keyword id="KW-0472">Membrane</keyword>
<keyword id="KW-1267">Proteomics identification</keyword>
<keyword id="KW-1185">Reference proteome</keyword>
<keyword id="KW-0808">Transferase</keyword>
<keyword id="KW-0812">Transmembrane</keyword>
<keyword id="KW-1133">Transmembrane helix</keyword>
<dbReference type="EC" id="2.4.1.-" evidence="2"/>
<dbReference type="EMBL" id="AL353621">
    <property type="status" value="NOT_ANNOTATED_CDS"/>
    <property type="molecule type" value="Genomic_DNA"/>
</dbReference>
<dbReference type="EMBL" id="BC006115">
    <property type="protein sequence ID" value="AAH06115.1"/>
    <property type="molecule type" value="mRNA"/>
</dbReference>
<dbReference type="EMBL" id="BC033550">
    <property type="protein sequence ID" value="AAH33550.1"/>
    <property type="molecule type" value="mRNA"/>
</dbReference>
<dbReference type="CCDS" id="CCDS6757.1"/>
<dbReference type="RefSeq" id="NP_001290036.1">
    <property type="nucleotide sequence ID" value="NM_001303107.2"/>
</dbReference>
<dbReference type="RefSeq" id="NP_001290037.1">
    <property type="nucleotide sequence ID" value="NM_001303108.2"/>
</dbReference>
<dbReference type="RefSeq" id="NP_001358162.1">
    <property type="nucleotide sequence ID" value="NM_001371233.1"/>
</dbReference>
<dbReference type="RefSeq" id="NP_115718.1">
    <property type="nucleotide sequence ID" value="NM_032342.3"/>
</dbReference>
<dbReference type="RefSeq" id="XP_016870695.1">
    <property type="nucleotide sequence ID" value="XM_017015206.1"/>
</dbReference>
<dbReference type="RefSeq" id="XP_024303469.1">
    <property type="nucleotide sequence ID" value="XM_024447701.2"/>
</dbReference>
<dbReference type="RefSeq" id="XP_054219959.1">
    <property type="nucleotide sequence ID" value="XM_054363984.1"/>
</dbReference>
<dbReference type="BioGRID" id="124028">
    <property type="interactions" value="107"/>
</dbReference>
<dbReference type="FunCoup" id="Q9BRR3">
    <property type="interactions" value="414"/>
</dbReference>
<dbReference type="IntAct" id="Q9BRR3">
    <property type="interactions" value="39"/>
</dbReference>
<dbReference type="STRING" id="9606.ENSP00000363984"/>
<dbReference type="GlyCosmos" id="Q9BRR3">
    <property type="glycosylation" value="1 site, No reported glycans"/>
</dbReference>
<dbReference type="GlyGen" id="Q9BRR3">
    <property type="glycosylation" value="1 site"/>
</dbReference>
<dbReference type="iPTMnet" id="Q9BRR3"/>
<dbReference type="PhosphoSitePlus" id="Q9BRR3"/>
<dbReference type="BioMuta" id="TMEM246"/>
<dbReference type="DMDM" id="71152417"/>
<dbReference type="jPOST" id="Q9BRR3"/>
<dbReference type="MassIVE" id="Q9BRR3"/>
<dbReference type="PaxDb" id="9606-ENSP00000363984"/>
<dbReference type="PeptideAtlas" id="Q9BRR3"/>
<dbReference type="ProteomicsDB" id="78811"/>
<dbReference type="Pumba" id="Q9BRR3"/>
<dbReference type="Antibodypedia" id="54396">
    <property type="antibodies" value="20 antibodies from 8 providers"/>
</dbReference>
<dbReference type="DNASU" id="84302"/>
<dbReference type="Ensembl" id="ENST00000374847.5">
    <property type="protein sequence ID" value="ENSP00000363980.1"/>
    <property type="gene ID" value="ENSG00000165152.9"/>
</dbReference>
<dbReference type="Ensembl" id="ENST00000374848.8">
    <property type="protein sequence ID" value="ENSP00000363981.3"/>
    <property type="gene ID" value="ENSG00000165152.9"/>
</dbReference>
<dbReference type="Ensembl" id="ENST00000374851.1">
    <property type="protein sequence ID" value="ENSP00000363984.1"/>
    <property type="gene ID" value="ENSG00000165152.9"/>
</dbReference>
<dbReference type="GeneID" id="84302"/>
<dbReference type="KEGG" id="hsa:84302"/>
<dbReference type="MANE-Select" id="ENST00000374848.8">
    <property type="protein sequence ID" value="ENSP00000363981.3"/>
    <property type="RefSeq nucleotide sequence ID" value="NM_032342.3"/>
    <property type="RefSeq protein sequence ID" value="NP_115718.1"/>
</dbReference>
<dbReference type="UCSC" id="uc004bbm.4">
    <property type="organism name" value="human"/>
</dbReference>
<dbReference type="AGR" id="HGNC:28180"/>
<dbReference type="CTD" id="84302"/>
<dbReference type="DisGeNET" id="84302"/>
<dbReference type="GeneCards" id="PGAP4"/>
<dbReference type="HGNC" id="HGNC:28180">
    <property type="gene designation" value="PGAP4"/>
</dbReference>
<dbReference type="HPA" id="ENSG00000165152">
    <property type="expression patterns" value="Low tissue specificity"/>
</dbReference>
<dbReference type="MIM" id="620264">
    <property type="type" value="gene"/>
</dbReference>
<dbReference type="neXtProt" id="NX_Q9BRR3"/>
<dbReference type="OpenTargets" id="ENSG00000165152"/>
<dbReference type="VEuPathDB" id="HostDB:ENSG00000165152"/>
<dbReference type="eggNOG" id="ENOG502QT3K">
    <property type="taxonomic scope" value="Eukaryota"/>
</dbReference>
<dbReference type="GeneTree" id="ENSGT00500000045018"/>
<dbReference type="HOGENOM" id="CLU_049086_0_0_1"/>
<dbReference type="InParanoid" id="Q9BRR3"/>
<dbReference type="OMA" id="YWNPCSF"/>
<dbReference type="PAN-GO" id="Q9BRR3">
    <property type="GO annotations" value="3 GO annotations based on evolutionary models"/>
</dbReference>
<dbReference type="PhylomeDB" id="Q9BRR3"/>
<dbReference type="TreeFam" id="TF313998"/>
<dbReference type="PathwayCommons" id="Q9BRR3"/>
<dbReference type="SignaLink" id="Q9BRR3"/>
<dbReference type="BioGRID-ORCS" id="84302">
    <property type="hits" value="10 hits in 1151 CRISPR screens"/>
</dbReference>
<dbReference type="ChiTaRS" id="TMEM246">
    <property type="organism name" value="human"/>
</dbReference>
<dbReference type="GenomeRNAi" id="84302"/>
<dbReference type="Pharos" id="Q9BRR3">
    <property type="development level" value="Tdark"/>
</dbReference>
<dbReference type="PRO" id="PR:Q9BRR3"/>
<dbReference type="Proteomes" id="UP000005640">
    <property type="component" value="Chromosome 9"/>
</dbReference>
<dbReference type="RNAct" id="Q9BRR3">
    <property type="molecule type" value="protein"/>
</dbReference>
<dbReference type="Bgee" id="ENSG00000165152">
    <property type="expression patterns" value="Expressed in pons and 185 other cell types or tissues"/>
</dbReference>
<dbReference type="ExpressionAtlas" id="Q9BRR3">
    <property type="expression patterns" value="baseline and differential"/>
</dbReference>
<dbReference type="GO" id="GO:0000139">
    <property type="term" value="C:Golgi membrane"/>
    <property type="evidence" value="ECO:0000314"/>
    <property type="project" value="UniProtKB"/>
</dbReference>
<dbReference type="GO" id="GO:0016757">
    <property type="term" value="F:glycosyltransferase activity"/>
    <property type="evidence" value="ECO:0000314"/>
    <property type="project" value="UniProtKB"/>
</dbReference>
<dbReference type="GO" id="GO:0006506">
    <property type="term" value="P:GPI anchor biosynthetic process"/>
    <property type="evidence" value="ECO:0000315"/>
    <property type="project" value="UniProtKB"/>
</dbReference>
<dbReference type="CDD" id="cd22190">
    <property type="entry name" value="PGAP4"/>
    <property type="match status" value="1"/>
</dbReference>
<dbReference type="InterPro" id="IPR029675">
    <property type="entry name" value="PGAP4"/>
</dbReference>
<dbReference type="PANTHER" id="PTHR31410:SF1">
    <property type="entry name" value="POST-GPI ATTACHMENT TO PROTEINS FACTOR 4"/>
    <property type="match status" value="1"/>
</dbReference>
<dbReference type="PANTHER" id="PTHR31410">
    <property type="entry name" value="TRANSMEMBRANE PROTEIN 246"/>
    <property type="match status" value="1"/>
</dbReference>
<evidence type="ECO:0000255" key="1"/>
<evidence type="ECO:0000269" key="2">
    <source>
    </source>
</evidence>
<evidence type="ECO:0000303" key="3">
    <source>
    </source>
</evidence>
<evidence type="ECO:0000305" key="4"/>
<evidence type="ECO:0000305" key="5">
    <source>
    </source>
</evidence>
<evidence type="ECO:0000312" key="6">
    <source>
        <dbReference type="HGNC" id="HGNC:28180"/>
    </source>
</evidence>
<feature type="chain" id="PRO_0000089731" description="GPI-N-acetylgalactosamine transferase PGAP4">
    <location>
        <begin position="1"/>
        <end position="403"/>
    </location>
</feature>
<feature type="topological domain" description="Cytoplasmic" evidence="2">
    <location>
        <begin position="1"/>
        <end position="22"/>
    </location>
</feature>
<feature type="transmembrane region" description="Helical" evidence="1">
    <location>
        <begin position="23"/>
        <end position="43"/>
    </location>
</feature>
<feature type="topological domain" description="Lumenal" evidence="2">
    <location>
        <begin position="44"/>
        <end position="259"/>
    </location>
</feature>
<feature type="transmembrane region" description="Helical" evidence="1">
    <location>
        <begin position="260"/>
        <end position="280"/>
    </location>
</feature>
<feature type="topological domain" description="Cytoplasmic" evidence="2">
    <location>
        <begin position="281"/>
        <end position="287"/>
    </location>
</feature>
<feature type="transmembrane region" description="Helical" evidence="1">
    <location>
        <begin position="288"/>
        <end position="308"/>
    </location>
</feature>
<feature type="topological domain" description="Lumenal" evidence="2">
    <location>
        <begin position="309"/>
        <end position="403"/>
    </location>
</feature>
<feature type="short sequence motif" description="DXD motif" evidence="2">
    <location>
        <begin position="211"/>
        <end position="213"/>
    </location>
</feature>
<feature type="binding site" evidence="5">
    <location>
        <position position="109"/>
    </location>
    <ligand>
        <name>UDP-N-acetyl-alpha-D-galactosamine</name>
        <dbReference type="ChEBI" id="CHEBI:67138"/>
    </ligand>
</feature>
<feature type="binding site" evidence="5">
    <location>
        <position position="334"/>
    </location>
    <ligand>
        <name>UDP-N-acetyl-alpha-D-galactosamine</name>
        <dbReference type="ChEBI" id="CHEBI:67138"/>
    </ligand>
</feature>
<feature type="binding site" evidence="5">
    <location>
        <position position="335"/>
    </location>
    <ligand>
        <name>UDP-N-acetyl-alpha-D-galactosamine</name>
        <dbReference type="ChEBI" id="CHEBI:67138"/>
    </ligand>
</feature>
<feature type="binding site" evidence="5">
    <location>
        <position position="362"/>
    </location>
    <ligand>
        <name>UDP-N-acetyl-alpha-D-galactosamine</name>
        <dbReference type="ChEBI" id="CHEBI:67138"/>
    </ligand>
</feature>
<feature type="glycosylation site" description="N-linked (GalNAc...) asparagine" evidence="2">
    <location>
        <position position="87"/>
    </location>
</feature>
<feature type="disulfide bond" evidence="2">
    <location>
        <begin position="132"/>
        <end position="136"/>
    </location>
</feature>
<feature type="disulfide bond" evidence="2">
    <location>
        <begin position="144"/>
        <end position="194"/>
    </location>
</feature>
<feature type="disulfide bond" evidence="2">
    <location>
        <begin position="332"/>
        <end position="333"/>
    </location>
</feature>
<feature type="mutagenesis site" description="Loss of glycosylation. Not glycosylated; when associated with N-283. Glycosylated; when associated with N-347." evidence="2">
    <original>N</original>
    <variation>A</variation>
    <location>
        <position position="87"/>
    </location>
</feature>
<feature type="mutagenesis site" description="Reduces GPI-GalNAc transferase activity. No effect on Golgi apparatus membrane location." evidence="2">
    <original>V</original>
    <variation>A</variation>
    <location>
        <position position="109"/>
    </location>
</feature>
<feature type="mutagenesis site" description="Loss of GPI-GalNAc transferase activity." evidence="2">
    <original>E</original>
    <variation>A</variation>
    <location>
        <position position="211"/>
    </location>
</feature>
<feature type="mutagenesis site" description="Loss of GPI-GalNAc transferase activity." evidence="2">
    <original>D</original>
    <variation>A</variation>
    <location>
        <position position="213"/>
    </location>
</feature>
<feature type="mutagenesis site" description="Reduces GPI-GalNAc transferase activity. No effect on Golgi apparatus membrane location." evidence="2">
    <original>H</original>
    <variation>A</variation>
    <location>
        <position position="247"/>
    </location>
</feature>
<feature type="mutagenesis site" description="Slightly reduces GPI-GalNAc transferase activity. No effect on Golgi apparatus membrane location." evidence="2">
    <original>E</original>
    <variation>A</variation>
    <location>
        <position position="249"/>
    </location>
</feature>
<feature type="mutagenesis site" description="No effect on GPI-GalNAc transferase activity. No effect on Golgi apparatus membrane location." evidence="2">
    <original>M</original>
    <variation>A</variation>
    <location>
        <position position="260"/>
    </location>
</feature>
<feature type="mutagenesis site" description="No effect on GPI-GalNAc transferase activity. No effect on Golgi apparatus membrane location." evidence="2">
    <original>M</original>
    <variation>A</variation>
    <location>
        <position position="270"/>
    </location>
</feature>
<feature type="mutagenesis site" description="Not glycosylated; when associated with A-87." evidence="2">
    <original>F</original>
    <variation>N</variation>
    <location>
        <position position="283"/>
    </location>
</feature>
<feature type="mutagenesis site" description="No effect on GPI-GalNAc transferase activity. No effect on Golgi apparatus membrane location." evidence="2">
    <original>M</original>
    <variation>A</variation>
    <location>
        <position position="302"/>
    </location>
</feature>
<feature type="mutagenesis site" description="No effect on GPI-GalNAc transferase activity. No effect on Golgi apparatus membrane location." evidence="2">
    <original>H</original>
    <variation>A</variation>
    <location>
        <position position="311"/>
    </location>
</feature>
<feature type="mutagenesis site" description="Reduces GPI-GalNAc transferase activity. No effect on Golgi apparatus membrane location." evidence="2">
    <original>F</original>
    <variation>A</variation>
    <location>
        <position position="313"/>
    </location>
</feature>
<feature type="mutagenesis site" description="Strongly reduces GPI-GalNAc transferase activity. Accumulates in the endoplasmic reticulum." evidence="2">
    <original>R</original>
    <variation>A</variation>
    <location>
        <position position="317"/>
    </location>
</feature>
<feature type="mutagenesis site" description="Almost abolishes GPI-GalNAc transferase activity. No effect on Golgi apparatus membrane location." evidence="2">
    <original>T</original>
    <variation>A</variation>
    <location>
        <position position="334"/>
    </location>
</feature>
<feature type="mutagenesis site" description="Reduces GPI-GalNAc transferase activity. No effect on Golgi apparatus membrane location." evidence="2">
    <original>P</original>
    <variation>A</variation>
    <location>
        <position position="335"/>
    </location>
</feature>
<feature type="mutagenesis site" description="Glycosylated; when associated with A-87." evidence="2">
    <original>T</original>
    <variation>N</variation>
    <location>
        <position position="347"/>
    </location>
</feature>
<feature type="mutagenesis site" description="Reduces GPI-GalNAc transferase activity. No effect on Golgi apparatus membrane location." evidence="2">
    <original>K</original>
    <variation>A</variation>
    <location>
        <position position="362"/>
    </location>
</feature>
<feature type="mutagenesis site" description="Loss of GPI-GalNAc transferase activity." evidence="2">
    <original>D</original>
    <variation>A</variation>
    <location>
        <position position="363"/>
    </location>
</feature>
<reference key="1">
    <citation type="journal article" date="2004" name="Nature">
        <title>DNA sequence and analysis of human chromosome 9.</title>
        <authorList>
            <person name="Humphray S.J."/>
            <person name="Oliver K."/>
            <person name="Hunt A.R."/>
            <person name="Plumb R.W."/>
            <person name="Loveland J.E."/>
            <person name="Howe K.L."/>
            <person name="Andrews T.D."/>
            <person name="Searle S."/>
            <person name="Hunt S.E."/>
            <person name="Scott C.E."/>
            <person name="Jones M.C."/>
            <person name="Ainscough R."/>
            <person name="Almeida J.P."/>
            <person name="Ambrose K.D."/>
            <person name="Ashwell R.I.S."/>
            <person name="Babbage A.K."/>
            <person name="Babbage S."/>
            <person name="Bagguley C.L."/>
            <person name="Bailey J."/>
            <person name="Banerjee R."/>
            <person name="Barker D.J."/>
            <person name="Barlow K.F."/>
            <person name="Bates K."/>
            <person name="Beasley H."/>
            <person name="Beasley O."/>
            <person name="Bird C.P."/>
            <person name="Bray-Allen S."/>
            <person name="Brown A.J."/>
            <person name="Brown J.Y."/>
            <person name="Burford D."/>
            <person name="Burrill W."/>
            <person name="Burton J."/>
            <person name="Carder C."/>
            <person name="Carter N.P."/>
            <person name="Chapman J.C."/>
            <person name="Chen Y."/>
            <person name="Clarke G."/>
            <person name="Clark S.Y."/>
            <person name="Clee C.M."/>
            <person name="Clegg S."/>
            <person name="Collier R.E."/>
            <person name="Corby N."/>
            <person name="Crosier M."/>
            <person name="Cummings A.T."/>
            <person name="Davies J."/>
            <person name="Dhami P."/>
            <person name="Dunn M."/>
            <person name="Dutta I."/>
            <person name="Dyer L.W."/>
            <person name="Earthrowl M.E."/>
            <person name="Faulkner L."/>
            <person name="Fleming C.J."/>
            <person name="Frankish A."/>
            <person name="Frankland J.A."/>
            <person name="French L."/>
            <person name="Fricker D.G."/>
            <person name="Garner P."/>
            <person name="Garnett J."/>
            <person name="Ghori J."/>
            <person name="Gilbert J.G.R."/>
            <person name="Glison C."/>
            <person name="Grafham D.V."/>
            <person name="Gribble S."/>
            <person name="Griffiths C."/>
            <person name="Griffiths-Jones S."/>
            <person name="Grocock R."/>
            <person name="Guy J."/>
            <person name="Hall R.E."/>
            <person name="Hammond S."/>
            <person name="Harley J.L."/>
            <person name="Harrison E.S.I."/>
            <person name="Hart E.A."/>
            <person name="Heath P.D."/>
            <person name="Henderson C.D."/>
            <person name="Hopkins B.L."/>
            <person name="Howard P.J."/>
            <person name="Howden P.J."/>
            <person name="Huckle E."/>
            <person name="Johnson C."/>
            <person name="Johnson D."/>
            <person name="Joy A.A."/>
            <person name="Kay M."/>
            <person name="Keenan S."/>
            <person name="Kershaw J.K."/>
            <person name="Kimberley A.M."/>
            <person name="King A."/>
            <person name="Knights A."/>
            <person name="Laird G.K."/>
            <person name="Langford C."/>
            <person name="Lawlor S."/>
            <person name="Leongamornlert D.A."/>
            <person name="Leversha M."/>
            <person name="Lloyd C."/>
            <person name="Lloyd D.M."/>
            <person name="Lovell J."/>
            <person name="Martin S."/>
            <person name="Mashreghi-Mohammadi M."/>
            <person name="Matthews L."/>
            <person name="McLaren S."/>
            <person name="McLay K.E."/>
            <person name="McMurray A."/>
            <person name="Milne S."/>
            <person name="Nickerson T."/>
            <person name="Nisbett J."/>
            <person name="Nordsiek G."/>
            <person name="Pearce A.V."/>
            <person name="Peck A.I."/>
            <person name="Porter K.M."/>
            <person name="Pandian R."/>
            <person name="Pelan S."/>
            <person name="Phillimore B."/>
            <person name="Povey S."/>
            <person name="Ramsey Y."/>
            <person name="Rand V."/>
            <person name="Scharfe M."/>
            <person name="Sehra H.K."/>
            <person name="Shownkeen R."/>
            <person name="Sims S.K."/>
            <person name="Skuce C.D."/>
            <person name="Smith M."/>
            <person name="Steward C.A."/>
            <person name="Swarbreck D."/>
            <person name="Sycamore N."/>
            <person name="Tester J."/>
            <person name="Thorpe A."/>
            <person name="Tracey A."/>
            <person name="Tromans A."/>
            <person name="Thomas D.W."/>
            <person name="Wall M."/>
            <person name="Wallis J.M."/>
            <person name="West A.P."/>
            <person name="Whitehead S.L."/>
            <person name="Willey D.L."/>
            <person name="Williams S.A."/>
            <person name="Wilming L."/>
            <person name="Wray P.W."/>
            <person name="Young L."/>
            <person name="Ashurst J.L."/>
            <person name="Coulson A."/>
            <person name="Blocker H."/>
            <person name="Durbin R.M."/>
            <person name="Sulston J.E."/>
            <person name="Hubbard T."/>
            <person name="Jackson M.J."/>
            <person name="Bentley D.R."/>
            <person name="Beck S."/>
            <person name="Rogers J."/>
            <person name="Dunham I."/>
        </authorList>
    </citation>
    <scope>NUCLEOTIDE SEQUENCE [LARGE SCALE GENOMIC DNA]</scope>
</reference>
<reference key="2">
    <citation type="journal article" date="2004" name="Genome Res.">
        <title>The status, quality, and expansion of the NIH full-length cDNA project: the Mammalian Gene Collection (MGC).</title>
        <authorList>
            <consortium name="The MGC Project Team"/>
        </authorList>
    </citation>
    <scope>NUCLEOTIDE SEQUENCE [LARGE SCALE MRNA]</scope>
    <source>
        <tissue>Brain</tissue>
        <tissue>Testis</tissue>
    </source>
</reference>
<reference key="3">
    <citation type="journal article" date="2012" name="Proc. Natl. Acad. Sci. U.S.A.">
        <title>N-terminal acetylome analyses and functional insights of the N-terminal acetyltransferase NatB.</title>
        <authorList>
            <person name="Van Damme P."/>
            <person name="Lasa M."/>
            <person name="Polevoda B."/>
            <person name="Gazquez C."/>
            <person name="Elosegui-Artola A."/>
            <person name="Kim D.S."/>
            <person name="De Juan-Pardo E."/>
            <person name="Demeyer K."/>
            <person name="Hole K."/>
            <person name="Larrea E."/>
            <person name="Timmerman E."/>
            <person name="Prieto J."/>
            <person name="Arnesen T."/>
            <person name="Sherman F."/>
            <person name="Gevaert K."/>
            <person name="Aldabe R."/>
        </authorList>
    </citation>
    <scope>IDENTIFICATION BY MASS SPECTROMETRY [LARGE SCALE ANALYSIS]</scope>
</reference>
<reference key="4">
    <citation type="journal article" date="2018" name="Nat. Commun.">
        <title>Identification of a Golgi GPI-N-acetylgalactosamine transferase with tandem transmembrane regions in the catalytic domain.</title>
        <authorList>
            <person name="Hirata T."/>
            <person name="Mishra S.K."/>
            <person name="Nakamura S."/>
            <person name="Saito K."/>
            <person name="Motooka D."/>
            <person name="Takada Y."/>
            <person name="Kanzawa N."/>
            <person name="Murakami Y."/>
            <person name="Maeda Y."/>
            <person name="Fujita M."/>
            <person name="Yamaguchi Y."/>
            <person name="Kinoshita T."/>
        </authorList>
    </citation>
    <scope>FUNCTION</scope>
    <scope>CATALYTIC ACTIVITY</scope>
    <scope>DOMAIN</scope>
    <scope>SUBCELLULAR LOCATION</scope>
    <scope>TOPOLOGY</scope>
    <scope>DISULFIDE BOND</scope>
    <scope>GLYCOSYLATION AT ASN-87</scope>
    <scope>MUTAGENESIS OF ASN-87; VAL-109; GLU-211; ASP-213; HIS-247; GLU-249; MET-260; MET-270; PHE-283; MET-302; HIS-311; PHE-313; ARG-317; THR-334; PRO-335; THR-347; LYS-362 AND ASP-363</scope>
</reference>
<organism>
    <name type="scientific">Homo sapiens</name>
    <name type="common">Human</name>
    <dbReference type="NCBI Taxonomy" id="9606"/>
    <lineage>
        <taxon>Eukaryota</taxon>
        <taxon>Metazoa</taxon>
        <taxon>Chordata</taxon>
        <taxon>Craniata</taxon>
        <taxon>Vertebrata</taxon>
        <taxon>Euteleostomi</taxon>
        <taxon>Mammalia</taxon>
        <taxon>Eutheria</taxon>
        <taxon>Euarchontoglires</taxon>
        <taxon>Primates</taxon>
        <taxon>Haplorrhini</taxon>
        <taxon>Catarrhini</taxon>
        <taxon>Hominidae</taxon>
        <taxon>Homo</taxon>
    </lineage>
</organism>
<protein>
    <recommendedName>
        <fullName evidence="4">GPI-N-acetylgalactosamine transferase PGAP4</fullName>
        <shortName evidence="3">GPI-GalNAc transferase PGAP4</shortName>
        <ecNumber evidence="2">2.4.1.-</ecNumber>
    </recommendedName>
    <alternativeName>
        <fullName evidence="6">Post-GPI attachment to proteins GalNAc transferase 4</fullName>
    </alternativeName>
    <alternativeName>
        <fullName evidence="4">Post-GPI attachment to proteins factor 4</fullName>
    </alternativeName>
    <alternativeName>
        <fullName>Transmembrane protein 246</fullName>
    </alternativeName>
</protein>